<dbReference type="EC" id="3.1.2.-" evidence="7"/>
<dbReference type="EMBL" id="MK590975">
    <property type="protein sequence ID" value="QED41487.1"/>
    <property type="molecule type" value="mRNA"/>
</dbReference>
<dbReference type="GO" id="GO:0005737">
    <property type="term" value="C:cytoplasm"/>
    <property type="evidence" value="ECO:0007669"/>
    <property type="project" value="TreeGrafter"/>
</dbReference>
<dbReference type="GO" id="GO:0005634">
    <property type="term" value="C:nucleus"/>
    <property type="evidence" value="ECO:0007669"/>
    <property type="project" value="TreeGrafter"/>
</dbReference>
<dbReference type="GO" id="GO:0016787">
    <property type="term" value="F:hydrolase activity"/>
    <property type="evidence" value="ECO:0007669"/>
    <property type="project" value="UniProtKB-KW"/>
</dbReference>
<dbReference type="GO" id="GO:0044550">
    <property type="term" value="P:secondary metabolite biosynthetic process"/>
    <property type="evidence" value="ECO:0007669"/>
    <property type="project" value="TreeGrafter"/>
</dbReference>
<dbReference type="Gene3D" id="3.40.50.1820">
    <property type="entry name" value="alpha/beta hydrolase"/>
    <property type="match status" value="1"/>
</dbReference>
<dbReference type="InterPro" id="IPR029058">
    <property type="entry name" value="AB_hydrolase_fold"/>
</dbReference>
<dbReference type="InterPro" id="IPR005645">
    <property type="entry name" value="FSH-like_dom"/>
</dbReference>
<dbReference type="InterPro" id="IPR050593">
    <property type="entry name" value="LovG"/>
</dbReference>
<dbReference type="PANTHER" id="PTHR48070:SF3">
    <property type="entry name" value="ESTERASE DBAE-RELATED"/>
    <property type="match status" value="1"/>
</dbReference>
<dbReference type="PANTHER" id="PTHR48070">
    <property type="entry name" value="ESTERASE OVCA2"/>
    <property type="match status" value="1"/>
</dbReference>
<dbReference type="Pfam" id="PF03959">
    <property type="entry name" value="FSH1"/>
    <property type="match status" value="1"/>
</dbReference>
<dbReference type="SUPFAM" id="SSF53474">
    <property type="entry name" value="alpha/beta-Hydrolases"/>
    <property type="match status" value="1"/>
</dbReference>
<comment type="function">
    <text evidence="3 7">Esterase; part of the gene cluster that mediates the biosynthesis of dibenzodioxocinones such as pestalotiollide B, a novel class of inhibitors against cholesterol ester transfer protein (CEPT) (PubMed:31474098). The biosynthesis initiates from condensation of acetate and malonate units catalyzed by the non-reducing PKS pks8/GME11356. Pks8/GME11356 lacks a thioesterase (TE) domain, which is important to the cyclizing of the third ring of atrochrysone carboxylic acid, and the esterase GME11355 might play the role of TE and catalyzes the cyclization reaction of the C ring. The lactamase-like protein GME11357 (or other beta-lactamases in Pestalotiopsis microspora) probably hydrolyzes the thioester bond between the ACP of pks8/GME11356 and the intermediate to release atrochrysone carboxylic acid, which is spontaneously dehydrates to form endocrocin anthrone. Endocrocin anthrone is further converted to emodin via the endocrocin intermediate. Emodin is then oxidized by several enzymes such as the Baeyer-Villiger oxidase GME11358, the oxidoreductase GME11367, the short chain dehydrogenase/reductase GME11373, as well as by other oxidoreductases from the cluster, to modify the A and C rings and open the B ring, and finally yield monodictyphenone. The prenyltransferase GME11375 may catalyze the addition reaction between the C5 side chains and the carbon bone of dibenzodioxocinones. The remaining biochemical reactions to the final product dibenzodioxocinones should be methylation catalyzed by methyltransferase GME11366 and reduction and lactonization reaction catalyzed by a series of oxidordeuctases (Probable).</text>
</comment>
<comment type="pathway">
    <text evidence="3">Secondary metabolite biosynthesis.</text>
</comment>
<comment type="induction">
    <text evidence="4">The expression of the dibenzodioxocinones biosynthesis cluster is positively regulated by the transcription factor dibT.</text>
</comment>
<comment type="disruption phenotype">
    <text evidence="3">Completely abolishes the production of pestalotiollide B.</text>
</comment>
<comment type="similarity">
    <text evidence="6">Belongs to the LovG family.</text>
</comment>
<reference key="1">
    <citation type="journal article" date="2019" name="J. Microbiol. Biotechnol.">
        <title>A gene cluster for the biosynthesis of dibenzodioxocinons in the endophyte Pestalotiopsis microspora, a taxol producer.</title>
        <authorList>
            <person name="Liu Y."/>
            <person name="Chen L."/>
            <person name="Xie Q."/>
            <person name="Yu X."/>
            <person name="Duan A."/>
            <person name="Lin Y."/>
            <person name="Xiang B."/>
            <person name="Hao X."/>
            <person name="Chen W."/>
            <person name="Zhu X."/>
        </authorList>
    </citation>
    <scope>NUCLEOTIDE SEQUENCE [MRNA]</scope>
    <scope>FUNCTION</scope>
    <scope>DISRUPTION PHENOTYPE</scope>
    <scope>PATHWAY</scope>
    <source>
        <strain>NK17</strain>
    </source>
</reference>
<reference key="2">
    <citation type="journal article" date="2022" name="Microbiol. Res.">
        <title>Acquiring novel chemicals by overexpression of a transcription factor DibT in the dibenzodioxocinone biosynthetic cluster in Pestalotiopsis microspora.</title>
        <authorList>
            <person name="Liu Y."/>
            <person name="Fu Y."/>
            <person name="Zhou M."/>
            <person name="Hao X."/>
            <person name="Zhang P."/>
            <person name="Zhu X."/>
        </authorList>
    </citation>
    <scope>INDUCTION</scope>
</reference>
<name>GME55_PESMI</name>
<accession>A0A5B8YVD7</accession>
<gene>
    <name evidence="5" type="ORF">GME11355</name>
</gene>
<feature type="chain" id="PRO_0000456738" description="Esterase GME11355">
    <location>
        <begin position="1"/>
        <end position="268"/>
    </location>
</feature>
<feature type="active site" description="Charge relay system" evidence="1">
    <location>
        <position position="122"/>
    </location>
</feature>
<feature type="active site" description="Charge relay system" evidence="2">
    <location>
        <position position="212"/>
    </location>
</feature>
<feature type="active site" description="Charge relay system" evidence="2">
    <location>
        <position position="240"/>
    </location>
</feature>
<proteinExistence type="evidence at transcript level"/>
<sequence>MPSRNDTYDDKALSLPRILCLHGGGTNARIFESQCRVISAHLKPYFRLVFAEAPYESAPGPGVTSVYADYAPFKRWLPWLPEDEHASNEEVVHDIDQAIEEAIMSDDKKGASGPWVALLGFSQGAKLVMSLLIRQDVRRSRHAPPIAGPHWAFGVILAGRAPPVALDAGFFNSTMLCEPSQLDIVRPPDMIDAMSEDHRVRVPTIHMQGLFDQGLHLHREMLEDYCIEGTTRLIEWNAAHVVALKRSDVDVLITHILEVARETGVLRD</sequence>
<protein>
    <recommendedName>
        <fullName evidence="5">Esterase GME11355</fullName>
        <ecNumber evidence="7">3.1.2.-</ecNumber>
    </recommendedName>
    <alternativeName>
        <fullName evidence="5">Dibenzodioxocinones biosynthesis cluster protein GME11355</fullName>
    </alternativeName>
</protein>
<organism>
    <name type="scientific">Pestalotiopsis microspora</name>
    <dbReference type="NCBI Taxonomy" id="85828"/>
    <lineage>
        <taxon>Eukaryota</taxon>
        <taxon>Fungi</taxon>
        <taxon>Dikarya</taxon>
        <taxon>Ascomycota</taxon>
        <taxon>Pezizomycotina</taxon>
        <taxon>Sordariomycetes</taxon>
        <taxon>Xylariomycetidae</taxon>
        <taxon>Amphisphaeriales</taxon>
        <taxon>Sporocadaceae</taxon>
        <taxon>Pestalotiopsis</taxon>
    </lineage>
</organism>
<evidence type="ECO:0000250" key="1">
    <source>
        <dbReference type="UniProtKB" id="A0A161CKG1"/>
    </source>
</evidence>
<evidence type="ECO:0000250" key="2">
    <source>
        <dbReference type="UniProtKB" id="P38777"/>
    </source>
</evidence>
<evidence type="ECO:0000269" key="3">
    <source>
    </source>
</evidence>
<evidence type="ECO:0000269" key="4">
    <source>
    </source>
</evidence>
<evidence type="ECO:0000303" key="5">
    <source>
    </source>
</evidence>
<evidence type="ECO:0000305" key="6"/>
<evidence type="ECO:0000305" key="7">
    <source>
    </source>
</evidence>
<keyword id="KW-0378">Hydrolase</keyword>